<comment type="function">
    <text evidence="2">Part of a complex that catalyzes the reversible cleavage of acetyl-CoA, allowing growth on acetate as sole source of carbon and energy. The alpha-epsilon complex generates CO from CO(2), while the beta subunit (this protein) combines the CO with CoA and a methyl group to form acetyl-CoA. The methyl group, which is incorporated into acetyl-CoA, is transferred to the beta subunit by a corrinoid iron-sulfur protein (the gamma-delta complex).</text>
</comment>
<comment type="catalytic activity">
    <reaction evidence="2">
        <text>Co(I)-[corrinoid Fe-S protein] + acetyl-CoA + H(+) = methyl-Co(III)-[corrinoid Fe-S protein] + CO + CoA</text>
        <dbReference type="Rhea" id="RHEA:45212"/>
        <dbReference type="Rhea" id="RHEA-COMP:11110"/>
        <dbReference type="Rhea" id="RHEA-COMP:11111"/>
        <dbReference type="ChEBI" id="CHEBI:15378"/>
        <dbReference type="ChEBI" id="CHEBI:17245"/>
        <dbReference type="ChEBI" id="CHEBI:57287"/>
        <dbReference type="ChEBI" id="CHEBI:57288"/>
        <dbReference type="ChEBI" id="CHEBI:85033"/>
        <dbReference type="ChEBI" id="CHEBI:85035"/>
        <dbReference type="EC" id="2.3.1.169"/>
    </reaction>
</comment>
<comment type="cofactor">
    <cofactor>
        <name>[Ni-Fe-S] cluster</name>
        <dbReference type="ChEBI" id="CHEBI:60400"/>
    </cofactor>
    <text>Binds 1 [Ni-Fe-S] cluster.</text>
</comment>
<comment type="pathway">
    <text>One-carbon metabolism; methanogenesis from acetate.</text>
</comment>
<comment type="subunit">
    <text evidence="3">Monomer. The ACDS complex is made up of alpha, epsilon, beta, gamma and delta chains with a probable stoichiometry of (alpha(2)epsilon(2))(4)-beta(8)-(gamma(1)delta(1))(8) (Potential).</text>
</comment>
<comment type="similarity">
    <text evidence="3">Belongs to the CdhC family.</text>
</comment>
<gene>
    <name type="primary">cdhC2</name>
    <name type="ordered locus">MA_3862</name>
</gene>
<protein>
    <recommendedName>
        <fullName>Acetyl-CoA decarbonylase/synthase complex subunit beta 2</fullName>
        <shortName>ACDS complex subunit beta 2</shortName>
        <ecNumber>2.3.1.169</ecNumber>
    </recommendedName>
    <alternativeName>
        <fullName>ACDS complex acyltransferase 2</fullName>
    </alternativeName>
</protein>
<feature type="chain" id="PRO_0000155100" description="Acetyl-CoA decarbonylase/synthase complex subunit beta 2">
    <location>
        <begin position="1"/>
        <end position="470"/>
    </location>
</feature>
<feature type="binding site" evidence="1">
    <location>
        <position position="189"/>
    </location>
    <ligand>
        <name>[Ni-Fe-S] cluster</name>
        <dbReference type="ChEBI" id="CHEBI:60400"/>
    </ligand>
</feature>
<feature type="binding site" evidence="1">
    <location>
        <position position="192"/>
    </location>
    <ligand>
        <name>[Ni-Fe-S] cluster</name>
        <dbReference type="ChEBI" id="CHEBI:60400"/>
    </ligand>
</feature>
<feature type="binding site" evidence="1">
    <location>
        <position position="278"/>
    </location>
    <ligand>
        <name>[Ni-Fe-S] cluster</name>
        <dbReference type="ChEBI" id="CHEBI:60400"/>
    </ligand>
</feature>
<feature type="binding site" evidence="1">
    <location>
        <position position="280"/>
    </location>
    <ligand>
        <name>[Ni-Fe-S] cluster</name>
        <dbReference type="ChEBI" id="CHEBI:60400"/>
    </ligand>
</feature>
<proteinExistence type="inferred from homology"/>
<sequence length="470" mass="52427">MAEFPFEISPMFEGERVRKEGMFVELGGPKSLGLELVRAKPMDEIEDDKVTIVGPDLKEMEEGKTYPWAMIFNIGGELVEPDLESVVERRVHDFINYCQGIMHLNQRYDVWMRVSKDTAAKMDSFEPFGQAVMMLFKTELPFIEKMQVTFYTEQAEVEKQLEEAKAIFKARDERTKDLHDEDVDVFYGCTLCQSFAPTNVCVVSPDRVSLCGAINWFDGRAAAKVDPEGPQFEITKGDLIDAEKGEYTGVNDIAKKLSAGEFDKIKLHSFFDAPHTSCGCFEVVGFYIPEVDGIGWVNREYQGMAPNGIGFSTMAGQTGGGKQIVGFLGIGINYFYSPKFIQADGGWNRVVWLPSMLKDKIAETIPEDLKDKIATENDATDIESLKAFLQEKGHPVVATWAAAEEEEEEEEEEEEEVAVAAAPMMMPAAGFQMPAMPMMSGGSSGGIKLTFKNAKITIDKMIISEKKEKK</sequence>
<evidence type="ECO:0000255" key="1"/>
<evidence type="ECO:0000255" key="2">
    <source>
        <dbReference type="HAMAP-Rule" id="MF_01138"/>
    </source>
</evidence>
<evidence type="ECO:0000305" key="3"/>
<name>ACDB2_METAC</name>
<organism>
    <name type="scientific">Methanosarcina acetivorans (strain ATCC 35395 / DSM 2834 / JCM 12185 / C2A)</name>
    <dbReference type="NCBI Taxonomy" id="188937"/>
    <lineage>
        <taxon>Archaea</taxon>
        <taxon>Methanobacteriati</taxon>
        <taxon>Methanobacteriota</taxon>
        <taxon>Stenosarchaea group</taxon>
        <taxon>Methanomicrobia</taxon>
        <taxon>Methanosarcinales</taxon>
        <taxon>Methanosarcinaceae</taxon>
        <taxon>Methanosarcina</taxon>
    </lineage>
</organism>
<reference key="1">
    <citation type="journal article" date="2002" name="Genome Res.">
        <title>The genome of Methanosarcina acetivorans reveals extensive metabolic and physiological diversity.</title>
        <authorList>
            <person name="Galagan J.E."/>
            <person name="Nusbaum C."/>
            <person name="Roy A."/>
            <person name="Endrizzi M.G."/>
            <person name="Macdonald P."/>
            <person name="FitzHugh W."/>
            <person name="Calvo S."/>
            <person name="Engels R."/>
            <person name="Smirnov S."/>
            <person name="Atnoor D."/>
            <person name="Brown A."/>
            <person name="Allen N."/>
            <person name="Naylor J."/>
            <person name="Stange-Thomann N."/>
            <person name="DeArellano K."/>
            <person name="Johnson R."/>
            <person name="Linton L."/>
            <person name="McEwan P."/>
            <person name="McKernan K."/>
            <person name="Talamas J."/>
            <person name="Tirrell A."/>
            <person name="Ye W."/>
            <person name="Zimmer A."/>
            <person name="Barber R.D."/>
            <person name="Cann I."/>
            <person name="Graham D.E."/>
            <person name="Grahame D.A."/>
            <person name="Guss A.M."/>
            <person name="Hedderich R."/>
            <person name="Ingram-Smith C."/>
            <person name="Kuettner H.C."/>
            <person name="Krzycki J.A."/>
            <person name="Leigh J.A."/>
            <person name="Li W."/>
            <person name="Liu J."/>
            <person name="Mukhopadhyay B."/>
            <person name="Reeve J.N."/>
            <person name="Smith K."/>
            <person name="Springer T.A."/>
            <person name="Umayam L.A."/>
            <person name="White O."/>
            <person name="White R.H."/>
            <person name="de Macario E.C."/>
            <person name="Ferry J.G."/>
            <person name="Jarrell K.F."/>
            <person name="Jing H."/>
            <person name="Macario A.J.L."/>
            <person name="Paulsen I.T."/>
            <person name="Pritchett M."/>
            <person name="Sowers K.R."/>
            <person name="Swanson R.V."/>
            <person name="Zinder S.H."/>
            <person name="Lander E."/>
            <person name="Metcalf W.W."/>
            <person name="Birren B."/>
        </authorList>
    </citation>
    <scope>NUCLEOTIDE SEQUENCE [LARGE SCALE GENOMIC DNA]</scope>
    <source>
        <strain>ATCC 35395 / DSM 2834 / JCM 12185 / C2A</strain>
    </source>
</reference>
<accession>Q8TJC4</accession>
<keyword id="KW-0012">Acyltransferase</keyword>
<keyword id="KW-0408">Iron</keyword>
<keyword id="KW-0411">Iron-sulfur</keyword>
<keyword id="KW-0479">Metal-binding</keyword>
<keyword id="KW-0484">Methanogenesis</keyword>
<keyword id="KW-0533">Nickel</keyword>
<keyword id="KW-1185">Reference proteome</keyword>
<keyword id="KW-0808">Transferase</keyword>
<dbReference type="EC" id="2.3.1.169"/>
<dbReference type="EMBL" id="AE010299">
    <property type="protein sequence ID" value="AAM07213.1"/>
    <property type="molecule type" value="Genomic_DNA"/>
</dbReference>
<dbReference type="RefSeq" id="WP_011023760.1">
    <property type="nucleotide sequence ID" value="NC_003552.1"/>
</dbReference>
<dbReference type="SMR" id="Q8TJC4"/>
<dbReference type="FunCoup" id="Q8TJC4">
    <property type="interactions" value="72"/>
</dbReference>
<dbReference type="STRING" id="188937.MA_3862"/>
<dbReference type="EnsemblBacteria" id="AAM07213">
    <property type="protein sequence ID" value="AAM07213"/>
    <property type="gene ID" value="MA_3862"/>
</dbReference>
<dbReference type="GeneID" id="1475755"/>
<dbReference type="KEGG" id="mac:MA_3862"/>
<dbReference type="HOGENOM" id="CLU_613408_0_0_2"/>
<dbReference type="InParanoid" id="Q8TJC4"/>
<dbReference type="OrthoDB" id="69951at2157"/>
<dbReference type="PhylomeDB" id="Q8TJC4"/>
<dbReference type="UniPathway" id="UPA00642"/>
<dbReference type="Proteomes" id="UP000002487">
    <property type="component" value="Chromosome"/>
</dbReference>
<dbReference type="GO" id="GO:0016407">
    <property type="term" value="F:acetyltransferase activity"/>
    <property type="evidence" value="ECO:0007669"/>
    <property type="project" value="UniProtKB-UniRule"/>
</dbReference>
<dbReference type="GO" id="GO:0043885">
    <property type="term" value="F:anaerobic carbon-monoxide dehydrogenase activity"/>
    <property type="evidence" value="ECO:0007669"/>
    <property type="project" value="InterPro"/>
</dbReference>
<dbReference type="GO" id="GO:0043884">
    <property type="term" value="F:CO-methylating acetyl-CoA synthase activity"/>
    <property type="evidence" value="ECO:0007669"/>
    <property type="project" value="UniProtKB-EC"/>
</dbReference>
<dbReference type="GO" id="GO:0005506">
    <property type="term" value="F:iron ion binding"/>
    <property type="evidence" value="ECO:0007669"/>
    <property type="project" value="UniProtKB-UniRule"/>
</dbReference>
<dbReference type="GO" id="GO:0051536">
    <property type="term" value="F:iron-sulfur cluster binding"/>
    <property type="evidence" value="ECO:0007669"/>
    <property type="project" value="UniProtKB-KW"/>
</dbReference>
<dbReference type="GO" id="GO:0016151">
    <property type="term" value="F:nickel cation binding"/>
    <property type="evidence" value="ECO:0007669"/>
    <property type="project" value="UniProtKB-UniRule"/>
</dbReference>
<dbReference type="GO" id="GO:0006084">
    <property type="term" value="P:acetyl-CoA metabolic process"/>
    <property type="evidence" value="ECO:0007669"/>
    <property type="project" value="InterPro"/>
</dbReference>
<dbReference type="GO" id="GO:0019385">
    <property type="term" value="P:methanogenesis, from acetate"/>
    <property type="evidence" value="ECO:0007669"/>
    <property type="project" value="UniProtKB-UniRule"/>
</dbReference>
<dbReference type="FunFam" id="3.40.970.20:FF:000001">
    <property type="entry name" value="Acetyl-CoA decarbonylase/synthase complex subunit beta"/>
    <property type="match status" value="1"/>
</dbReference>
<dbReference type="Gene3D" id="3.30.1650.10">
    <property type="entry name" value="Bifunctional carbon monoxide dehydrogenase/acetyl-coa synthase(codh/acs), Chain M, domain 3"/>
    <property type="match status" value="1"/>
</dbReference>
<dbReference type="Gene3D" id="3.40.1470.10">
    <property type="entry name" value="Bifunctional carbon monoxide dehydrogenase/acetyl-coa synthase(codh/acs), Chain M, domain 5"/>
    <property type="match status" value="1"/>
</dbReference>
<dbReference type="Gene3D" id="3.40.970.20">
    <property type="entry name" value="Carbon monoxide dehydrogenase alpha subunit. Chain D, domain 4"/>
    <property type="match status" value="1"/>
</dbReference>
<dbReference type="HAMAP" id="MF_01138">
    <property type="entry name" value="CdhC"/>
    <property type="match status" value="1"/>
</dbReference>
<dbReference type="InterPro" id="IPR045822">
    <property type="entry name" value="ACS_CODH_B_C"/>
</dbReference>
<dbReference type="InterPro" id="IPR004461">
    <property type="entry name" value="CO_DH/Ac-CoA_synth_bsu"/>
</dbReference>
<dbReference type="InterPro" id="IPR038571">
    <property type="entry name" value="CO_DH/Ac-CoA_synth_bsu_3_sf"/>
</dbReference>
<dbReference type="InterPro" id="IPR023432">
    <property type="entry name" value="CO_DH/Ac-CoA_synth_bsu_arc"/>
</dbReference>
<dbReference type="InterPro" id="IPR011254">
    <property type="entry name" value="Prismane-like_sf"/>
</dbReference>
<dbReference type="NCBIfam" id="TIGR00316">
    <property type="entry name" value="cdhC"/>
    <property type="match status" value="1"/>
</dbReference>
<dbReference type="NCBIfam" id="NF003379">
    <property type="entry name" value="PRK04456.1"/>
    <property type="match status" value="1"/>
</dbReference>
<dbReference type="PANTHER" id="PTHR42281">
    <property type="match status" value="1"/>
</dbReference>
<dbReference type="PANTHER" id="PTHR42281:SF1">
    <property type="entry name" value="ACETYL-COA DECARBONYLASE_SYNTHASE COMPLEX SUBUNIT BETA 1"/>
    <property type="match status" value="1"/>
</dbReference>
<dbReference type="Pfam" id="PF19436">
    <property type="entry name" value="ACS_CODH_B_C"/>
    <property type="match status" value="1"/>
</dbReference>
<dbReference type="Pfam" id="PF03598">
    <property type="entry name" value="CdhC"/>
    <property type="match status" value="1"/>
</dbReference>
<dbReference type="SUPFAM" id="SSF56821">
    <property type="entry name" value="Prismane protein-like"/>
    <property type="match status" value="1"/>
</dbReference>